<proteinExistence type="evidence at transcript level"/>
<sequence length="215" mass="23787">MAAPPARARADYDYLIKLLLIGDSGVGKSCLLLRFSDGSFTTSFITTIGIDFKIRTIELDGKRIKLQIWDTAGQERFRTITTAYYRGAMGILLVYDVTDESSFNNIRNWIRNIEQHASDNVNKILVGNKADMDESKRAVPTAKGQALADEYGIKFFETSAKTNLNVEEVFFSIARDIKQRLADSDTRQEAQPSITIKPADQSGNQAAAKSACCGS</sequence>
<dbReference type="EMBL" id="Z49152">
    <property type="protein sequence ID" value="CAA89021.1"/>
    <property type="molecule type" value="mRNA"/>
</dbReference>
<dbReference type="PIR" id="T14565">
    <property type="entry name" value="T14565"/>
</dbReference>
<dbReference type="SMR" id="Q39433"/>
<dbReference type="KEGG" id="bvg:104900163"/>
<dbReference type="OMA" id="CDMNERR"/>
<dbReference type="PhylomeDB" id="Q39433"/>
<dbReference type="GO" id="GO:0005886">
    <property type="term" value="C:plasma membrane"/>
    <property type="evidence" value="ECO:0007669"/>
    <property type="project" value="UniProtKB-SubCell"/>
</dbReference>
<dbReference type="GO" id="GO:0005525">
    <property type="term" value="F:GTP binding"/>
    <property type="evidence" value="ECO:0007669"/>
    <property type="project" value="UniProtKB-KW"/>
</dbReference>
<dbReference type="GO" id="GO:0003924">
    <property type="term" value="F:GTPase activity"/>
    <property type="evidence" value="ECO:0007669"/>
    <property type="project" value="InterPro"/>
</dbReference>
<dbReference type="CDD" id="cd01867">
    <property type="entry name" value="Rab8_Rab10_Rab13_like"/>
    <property type="match status" value="1"/>
</dbReference>
<dbReference type="FunFam" id="3.40.50.300:FF:000308">
    <property type="entry name" value="ras-related protein RABE1c-like"/>
    <property type="match status" value="1"/>
</dbReference>
<dbReference type="Gene3D" id="3.40.50.300">
    <property type="entry name" value="P-loop containing nucleotide triphosphate hydrolases"/>
    <property type="match status" value="1"/>
</dbReference>
<dbReference type="InterPro" id="IPR027417">
    <property type="entry name" value="P-loop_NTPase"/>
</dbReference>
<dbReference type="InterPro" id="IPR005225">
    <property type="entry name" value="Small_GTP-bd"/>
</dbReference>
<dbReference type="InterPro" id="IPR001806">
    <property type="entry name" value="Small_GTPase"/>
</dbReference>
<dbReference type="InterPro" id="IPR050305">
    <property type="entry name" value="Small_GTPase_Rab"/>
</dbReference>
<dbReference type="NCBIfam" id="TIGR00231">
    <property type="entry name" value="small_GTP"/>
    <property type="match status" value="1"/>
</dbReference>
<dbReference type="PANTHER" id="PTHR47980">
    <property type="entry name" value="LD44762P"/>
    <property type="match status" value="1"/>
</dbReference>
<dbReference type="Pfam" id="PF00071">
    <property type="entry name" value="Ras"/>
    <property type="match status" value="1"/>
</dbReference>
<dbReference type="PRINTS" id="PR00449">
    <property type="entry name" value="RASTRNSFRMNG"/>
</dbReference>
<dbReference type="SMART" id="SM00177">
    <property type="entry name" value="ARF"/>
    <property type="match status" value="1"/>
</dbReference>
<dbReference type="SMART" id="SM00175">
    <property type="entry name" value="RAB"/>
    <property type="match status" value="1"/>
</dbReference>
<dbReference type="SMART" id="SM00176">
    <property type="entry name" value="RAN"/>
    <property type="match status" value="1"/>
</dbReference>
<dbReference type="SMART" id="SM00173">
    <property type="entry name" value="RAS"/>
    <property type="match status" value="1"/>
</dbReference>
<dbReference type="SMART" id="SM00174">
    <property type="entry name" value="RHO"/>
    <property type="match status" value="1"/>
</dbReference>
<dbReference type="SUPFAM" id="SSF52540">
    <property type="entry name" value="P-loop containing nucleoside triphosphate hydrolases"/>
    <property type="match status" value="1"/>
</dbReference>
<dbReference type="PROSITE" id="PS51419">
    <property type="entry name" value="RAB"/>
    <property type="match status" value="1"/>
</dbReference>
<accession>Q39433</accession>
<protein>
    <recommendedName>
        <fullName>Ras-related protein RAB1BV</fullName>
    </recommendedName>
</protein>
<gene>
    <name type="primary">RAB1BV</name>
</gene>
<organism>
    <name type="scientific">Beta vulgaris</name>
    <name type="common">Sugar beet</name>
    <dbReference type="NCBI Taxonomy" id="161934"/>
    <lineage>
        <taxon>Eukaryota</taxon>
        <taxon>Viridiplantae</taxon>
        <taxon>Streptophyta</taxon>
        <taxon>Embryophyta</taxon>
        <taxon>Tracheophyta</taxon>
        <taxon>Spermatophyta</taxon>
        <taxon>Magnoliopsida</taxon>
        <taxon>eudicotyledons</taxon>
        <taxon>Gunneridae</taxon>
        <taxon>Pentapetalae</taxon>
        <taxon>Caryophyllales</taxon>
        <taxon>Chenopodiaceae</taxon>
        <taxon>Betoideae</taxon>
        <taxon>Beta</taxon>
    </lineage>
</organism>
<comment type="subcellular location">
    <subcellularLocation>
        <location evidence="3">Cell membrane</location>
        <topology evidence="3">Lipid-anchor</topology>
        <orientation evidence="3">Cytoplasmic side</orientation>
    </subcellularLocation>
</comment>
<comment type="similarity">
    <text evidence="3">Belongs to the small GTPase superfamily. Rab family.</text>
</comment>
<evidence type="ECO:0000250" key="1"/>
<evidence type="ECO:0000256" key="2">
    <source>
        <dbReference type="SAM" id="MobiDB-lite"/>
    </source>
</evidence>
<evidence type="ECO:0000305" key="3"/>
<name>RB1BV_BETVU</name>
<feature type="chain" id="PRO_0000121290" description="Ras-related protein RAB1BV">
    <location>
        <begin position="1"/>
        <end position="215"/>
    </location>
</feature>
<feature type="region of interest" description="Disordered" evidence="2">
    <location>
        <begin position="183"/>
        <end position="215"/>
    </location>
</feature>
<feature type="binding site" evidence="1">
    <location>
        <begin position="22"/>
        <end position="29"/>
    </location>
    <ligand>
        <name>GTP</name>
        <dbReference type="ChEBI" id="CHEBI:37565"/>
    </ligand>
</feature>
<feature type="binding site" evidence="1">
    <location>
        <begin position="70"/>
        <end position="74"/>
    </location>
    <ligand>
        <name>GTP</name>
        <dbReference type="ChEBI" id="CHEBI:37565"/>
    </ligand>
</feature>
<feature type="binding site" evidence="1">
    <location>
        <begin position="128"/>
        <end position="131"/>
    </location>
    <ligand>
        <name>GTP</name>
        <dbReference type="ChEBI" id="CHEBI:37565"/>
    </ligand>
</feature>
<feature type="lipid moiety-binding region" description="S-geranylgeranyl cysteine" evidence="1">
    <location>
        <position position="212"/>
    </location>
</feature>
<feature type="lipid moiety-binding region" description="S-geranylgeranyl cysteine" evidence="1">
    <location>
        <position position="213"/>
    </location>
</feature>
<keyword id="KW-1003">Cell membrane</keyword>
<keyword id="KW-0342">GTP-binding</keyword>
<keyword id="KW-0449">Lipoprotein</keyword>
<keyword id="KW-0472">Membrane</keyword>
<keyword id="KW-0547">Nucleotide-binding</keyword>
<keyword id="KW-0636">Prenylation</keyword>
<reference key="1">
    <citation type="journal article" date="1996" name="C. R. Acad. Sci. III, Sci. Vie">
        <title>Molecular cloning and structural analysis of cDNAs that encode 3 small GTP-binding proteins from sugar beet.</title>
        <authorList>
            <person name="Dallery E."/>
            <person name="Quief S."/>
            <person name="Ben-Jilany K.E."/>
            <person name="Kerckaert J.-P."/>
            <person name="Hagege D."/>
        </authorList>
    </citation>
    <scope>NUCLEOTIDE SEQUENCE [MRNA]</scope>
    <source>
        <strain>cv. D100 KS 38080</strain>
    </source>
</reference>